<comment type="subunit">
    <text evidence="1">Part of the 50S ribosomal subunit.</text>
</comment>
<comment type="similarity">
    <text evidence="1">Belongs to the universal ribosomal protein uL30 family.</text>
</comment>
<comment type="sequence caution" evidence="2">
    <conflict type="erroneous initiation">
        <sequence resource="EMBL-CDS" id="AAM40223"/>
    </conflict>
</comment>
<accession>Q8PC35</accession>
<sequence length="63" mass="7117">MAKDTGKTVKVRLVRGLRGTQSRHRLSVHALGLNKINDVRELKDSPQVRGLINTVHYLVKVED</sequence>
<dbReference type="EMBL" id="AE008922">
    <property type="protein sequence ID" value="AAM40223.1"/>
    <property type="status" value="ALT_INIT"/>
    <property type="molecule type" value="Genomic_DNA"/>
</dbReference>
<dbReference type="RefSeq" id="NP_636299.1">
    <property type="nucleotide sequence ID" value="NC_003902.1"/>
</dbReference>
<dbReference type="RefSeq" id="WP_006450646.1">
    <property type="nucleotide sequence ID" value="NC_003902.1"/>
</dbReference>
<dbReference type="SMR" id="Q8PC35"/>
<dbReference type="STRING" id="190485.XCC0913"/>
<dbReference type="EnsemblBacteria" id="AAM40223">
    <property type="protein sequence ID" value="AAM40223"/>
    <property type="gene ID" value="XCC0913"/>
</dbReference>
<dbReference type="GeneID" id="95583332"/>
<dbReference type="KEGG" id="xcc:XCC0913"/>
<dbReference type="PATRIC" id="fig|190485.4.peg.985"/>
<dbReference type="eggNOG" id="COG1841">
    <property type="taxonomic scope" value="Bacteria"/>
</dbReference>
<dbReference type="HOGENOM" id="CLU_131047_1_4_6"/>
<dbReference type="OrthoDB" id="9812790at2"/>
<dbReference type="Proteomes" id="UP000001010">
    <property type="component" value="Chromosome"/>
</dbReference>
<dbReference type="GO" id="GO:0022625">
    <property type="term" value="C:cytosolic large ribosomal subunit"/>
    <property type="evidence" value="ECO:0000318"/>
    <property type="project" value="GO_Central"/>
</dbReference>
<dbReference type="GO" id="GO:0003735">
    <property type="term" value="F:structural constituent of ribosome"/>
    <property type="evidence" value="ECO:0007669"/>
    <property type="project" value="InterPro"/>
</dbReference>
<dbReference type="GO" id="GO:0006412">
    <property type="term" value="P:translation"/>
    <property type="evidence" value="ECO:0007669"/>
    <property type="project" value="UniProtKB-UniRule"/>
</dbReference>
<dbReference type="CDD" id="cd00355">
    <property type="entry name" value="Ribosomal_L30_like"/>
    <property type="match status" value="1"/>
</dbReference>
<dbReference type="FunFam" id="3.30.1390.20:FF:000006">
    <property type="entry name" value="50S ribosomal protein L30"/>
    <property type="match status" value="1"/>
</dbReference>
<dbReference type="Gene3D" id="3.30.1390.20">
    <property type="entry name" value="Ribosomal protein L30, ferredoxin-like fold domain"/>
    <property type="match status" value="1"/>
</dbReference>
<dbReference type="HAMAP" id="MF_01371_B">
    <property type="entry name" value="Ribosomal_uL30_B"/>
    <property type="match status" value="1"/>
</dbReference>
<dbReference type="InterPro" id="IPR036919">
    <property type="entry name" value="Ribo_uL30_ferredoxin-like_sf"/>
</dbReference>
<dbReference type="InterPro" id="IPR005996">
    <property type="entry name" value="Ribosomal_uL30_bac-type"/>
</dbReference>
<dbReference type="InterPro" id="IPR016082">
    <property type="entry name" value="Ribosomal_uL30_ferredoxin-like"/>
</dbReference>
<dbReference type="NCBIfam" id="TIGR01308">
    <property type="entry name" value="rpmD_bact"/>
    <property type="match status" value="1"/>
</dbReference>
<dbReference type="PANTHER" id="PTHR15892:SF2">
    <property type="entry name" value="LARGE RIBOSOMAL SUBUNIT PROTEIN UL30M"/>
    <property type="match status" value="1"/>
</dbReference>
<dbReference type="PANTHER" id="PTHR15892">
    <property type="entry name" value="MITOCHONDRIAL RIBOSOMAL PROTEIN L30"/>
    <property type="match status" value="1"/>
</dbReference>
<dbReference type="Pfam" id="PF00327">
    <property type="entry name" value="Ribosomal_L30"/>
    <property type="match status" value="1"/>
</dbReference>
<dbReference type="PIRSF" id="PIRSF002211">
    <property type="entry name" value="Ribosomal_L30_bac-type"/>
    <property type="match status" value="1"/>
</dbReference>
<dbReference type="SUPFAM" id="SSF55129">
    <property type="entry name" value="Ribosomal protein L30p/L7e"/>
    <property type="match status" value="1"/>
</dbReference>
<keyword id="KW-1185">Reference proteome</keyword>
<keyword id="KW-0687">Ribonucleoprotein</keyword>
<keyword id="KW-0689">Ribosomal protein</keyword>
<reference key="1">
    <citation type="journal article" date="2002" name="Nature">
        <title>Comparison of the genomes of two Xanthomonas pathogens with differing host specificities.</title>
        <authorList>
            <person name="da Silva A.C.R."/>
            <person name="Ferro J.A."/>
            <person name="Reinach F.C."/>
            <person name="Farah C.S."/>
            <person name="Furlan L.R."/>
            <person name="Quaggio R.B."/>
            <person name="Monteiro-Vitorello C.B."/>
            <person name="Van Sluys M.A."/>
            <person name="Almeida N.F. Jr."/>
            <person name="Alves L.M.C."/>
            <person name="do Amaral A.M."/>
            <person name="Bertolini M.C."/>
            <person name="Camargo L.E.A."/>
            <person name="Camarotte G."/>
            <person name="Cannavan F."/>
            <person name="Cardozo J."/>
            <person name="Chambergo F."/>
            <person name="Ciapina L.P."/>
            <person name="Cicarelli R.M.B."/>
            <person name="Coutinho L.L."/>
            <person name="Cursino-Santos J.R."/>
            <person name="El-Dorry H."/>
            <person name="Faria J.B."/>
            <person name="Ferreira A.J.S."/>
            <person name="Ferreira R.C.C."/>
            <person name="Ferro M.I.T."/>
            <person name="Formighieri E.F."/>
            <person name="Franco M.C."/>
            <person name="Greggio C.C."/>
            <person name="Gruber A."/>
            <person name="Katsuyama A.M."/>
            <person name="Kishi L.T."/>
            <person name="Leite R.P."/>
            <person name="Lemos E.G.M."/>
            <person name="Lemos M.V.F."/>
            <person name="Locali E.C."/>
            <person name="Machado M.A."/>
            <person name="Madeira A.M.B.N."/>
            <person name="Martinez-Rossi N.M."/>
            <person name="Martins E.C."/>
            <person name="Meidanis J."/>
            <person name="Menck C.F.M."/>
            <person name="Miyaki C.Y."/>
            <person name="Moon D.H."/>
            <person name="Moreira L.M."/>
            <person name="Novo M.T.M."/>
            <person name="Okura V.K."/>
            <person name="Oliveira M.C."/>
            <person name="Oliveira V.R."/>
            <person name="Pereira H.A."/>
            <person name="Rossi A."/>
            <person name="Sena J.A.D."/>
            <person name="Silva C."/>
            <person name="de Souza R.F."/>
            <person name="Spinola L.A.F."/>
            <person name="Takita M.A."/>
            <person name="Tamura R.E."/>
            <person name="Teixeira E.C."/>
            <person name="Tezza R.I.D."/>
            <person name="Trindade dos Santos M."/>
            <person name="Truffi D."/>
            <person name="Tsai S.M."/>
            <person name="White F.F."/>
            <person name="Setubal J.C."/>
            <person name="Kitajima J.P."/>
        </authorList>
    </citation>
    <scope>NUCLEOTIDE SEQUENCE [LARGE SCALE GENOMIC DNA]</scope>
    <source>
        <strain>ATCC 33913 / DSM 3586 / NCPPB 528 / LMG 568 / P 25</strain>
    </source>
</reference>
<gene>
    <name evidence="1" type="primary">rpmD</name>
    <name type="ordered locus">XCC0913</name>
</gene>
<evidence type="ECO:0000255" key="1">
    <source>
        <dbReference type="HAMAP-Rule" id="MF_01371"/>
    </source>
</evidence>
<evidence type="ECO:0000305" key="2"/>
<name>RL30_XANCP</name>
<proteinExistence type="inferred from homology"/>
<protein>
    <recommendedName>
        <fullName evidence="1">Large ribosomal subunit protein uL30</fullName>
    </recommendedName>
    <alternativeName>
        <fullName evidence="2">50S ribosomal protein L30</fullName>
    </alternativeName>
</protein>
<organism>
    <name type="scientific">Xanthomonas campestris pv. campestris (strain ATCC 33913 / DSM 3586 / NCPPB 528 / LMG 568 / P 25)</name>
    <dbReference type="NCBI Taxonomy" id="190485"/>
    <lineage>
        <taxon>Bacteria</taxon>
        <taxon>Pseudomonadati</taxon>
        <taxon>Pseudomonadota</taxon>
        <taxon>Gammaproteobacteria</taxon>
        <taxon>Lysobacterales</taxon>
        <taxon>Lysobacteraceae</taxon>
        <taxon>Xanthomonas</taxon>
    </lineage>
</organism>
<feature type="chain" id="PRO_0000273891" description="Large ribosomal subunit protein uL30">
    <location>
        <begin position="1"/>
        <end position="63"/>
    </location>
</feature>